<proteinExistence type="inferred from homology"/>
<feature type="chain" id="PRO_0000117017" description="Adenosylhomocysteinase">
    <location>
        <begin position="1"/>
        <end position="410"/>
    </location>
</feature>
<feature type="binding site" evidence="1">
    <location>
        <position position="117"/>
    </location>
    <ligand>
        <name>substrate</name>
    </ligand>
</feature>
<feature type="binding site" evidence="1">
    <location>
        <position position="142"/>
    </location>
    <ligand>
        <name>substrate</name>
    </ligand>
</feature>
<feature type="binding site" evidence="1">
    <location>
        <begin position="143"/>
        <end position="145"/>
    </location>
    <ligand>
        <name>NAD(+)</name>
        <dbReference type="ChEBI" id="CHEBI:57540"/>
    </ligand>
</feature>
<feature type="binding site" evidence="1">
    <location>
        <position position="172"/>
    </location>
    <ligand>
        <name>substrate</name>
    </ligand>
</feature>
<feature type="binding site" evidence="1">
    <location>
        <position position="176"/>
    </location>
    <ligand>
        <name>substrate</name>
    </ligand>
</feature>
<feature type="binding site" evidence="1">
    <location>
        <position position="177"/>
    </location>
    <ligand>
        <name>NAD(+)</name>
        <dbReference type="ChEBI" id="CHEBI:57540"/>
    </ligand>
</feature>
<feature type="binding site" evidence="1">
    <location>
        <begin position="206"/>
        <end position="211"/>
    </location>
    <ligand>
        <name>NAD(+)</name>
        <dbReference type="ChEBI" id="CHEBI:57540"/>
    </ligand>
</feature>
<feature type="binding site" evidence="1">
    <location>
        <position position="229"/>
    </location>
    <ligand>
        <name>NAD(+)</name>
        <dbReference type="ChEBI" id="CHEBI:57540"/>
    </ligand>
</feature>
<feature type="binding site" evidence="1">
    <location>
        <begin position="285"/>
        <end position="287"/>
    </location>
    <ligand>
        <name>NAD(+)</name>
        <dbReference type="ChEBI" id="CHEBI:57540"/>
    </ligand>
</feature>
<feature type="binding site" evidence="1">
    <location>
        <position position="332"/>
    </location>
    <ligand>
        <name>NAD(+)</name>
        <dbReference type="ChEBI" id="CHEBI:57540"/>
    </ligand>
</feature>
<sequence>MTESKGFLRLAWARDHMPVIAEIRKRFQAEKPFKGIKVAMALHVEAKTGIFALLLKEGGAEVKMASCNPLSSDDSVVQSLKEDYGMPVFARKGETSEEYYEYLHRTLDVQPDIIIDDGGDLTKIVHTERKDLAKNILGGNEETTTGVQRLRAMERSGVLLFPMFDVNDANMKHLFDNRYGTGQSTLDGIMNATNLLIAGRTVVVAGYGYCGRGIAMRLKGMGANVIVTEIDPIKANEAIMDGFQVRRMNNAIRDADMVITATGMKDVVKYEDALVAKKNIVLANAGHFNNEVAVSEIEKRSLEVNEVREFVKRYRLENGNTVDIIADGRLVNLAAGQGHPVEIMDLSFALQALTAEYLVKNHDKLERKVYPVPADIDRYVAEIRLKQFGGELDQLNEEQIKYLNSWDEGT</sequence>
<gene>
    <name evidence="1" type="primary">ahcY</name>
    <name type="ordered locus">Ta0469</name>
</gene>
<accession>Q9HKX4</accession>
<comment type="function">
    <text evidence="1">May play a key role in the regulation of the intracellular concentration of adenosylhomocysteine.</text>
</comment>
<comment type="catalytic activity">
    <reaction evidence="1">
        <text>S-adenosyl-L-homocysteine + H2O = L-homocysteine + adenosine</text>
        <dbReference type="Rhea" id="RHEA:21708"/>
        <dbReference type="ChEBI" id="CHEBI:15377"/>
        <dbReference type="ChEBI" id="CHEBI:16335"/>
        <dbReference type="ChEBI" id="CHEBI:57856"/>
        <dbReference type="ChEBI" id="CHEBI:58199"/>
        <dbReference type="EC" id="3.13.2.1"/>
    </reaction>
</comment>
<comment type="cofactor">
    <cofactor evidence="1">
        <name>NAD(+)</name>
        <dbReference type="ChEBI" id="CHEBI:57540"/>
    </cofactor>
    <text evidence="1">Binds 1 NAD(+) per subunit.</text>
</comment>
<comment type="pathway">
    <text evidence="1">Amino-acid biosynthesis; L-homocysteine biosynthesis; L-homocysteine from S-adenosyl-L-homocysteine: step 1/1.</text>
</comment>
<comment type="subcellular location">
    <subcellularLocation>
        <location evidence="1">Cytoplasm</location>
    </subcellularLocation>
</comment>
<comment type="similarity">
    <text evidence="1">Belongs to the adenosylhomocysteinase family.</text>
</comment>
<organism>
    <name type="scientific">Thermoplasma acidophilum (strain ATCC 25905 / DSM 1728 / JCM 9062 / NBRC 15155 / AMRC-C165)</name>
    <dbReference type="NCBI Taxonomy" id="273075"/>
    <lineage>
        <taxon>Archaea</taxon>
        <taxon>Methanobacteriati</taxon>
        <taxon>Thermoplasmatota</taxon>
        <taxon>Thermoplasmata</taxon>
        <taxon>Thermoplasmatales</taxon>
        <taxon>Thermoplasmataceae</taxon>
        <taxon>Thermoplasma</taxon>
    </lineage>
</organism>
<protein>
    <recommendedName>
        <fullName evidence="1">Adenosylhomocysteinase</fullName>
        <ecNumber evidence="1">3.13.2.1</ecNumber>
    </recommendedName>
    <alternativeName>
        <fullName evidence="1">S-adenosyl-L-homocysteine hydrolase</fullName>
        <shortName evidence="1">AdoHcyase</shortName>
    </alternativeName>
</protein>
<keyword id="KW-0963">Cytoplasm</keyword>
<keyword id="KW-0378">Hydrolase</keyword>
<keyword id="KW-0520">NAD</keyword>
<keyword id="KW-0554">One-carbon metabolism</keyword>
<keyword id="KW-1185">Reference proteome</keyword>
<reference key="1">
    <citation type="journal article" date="2000" name="Nature">
        <title>The genome sequence of the thermoacidophilic scavenger Thermoplasma acidophilum.</title>
        <authorList>
            <person name="Ruepp A."/>
            <person name="Graml W."/>
            <person name="Santos-Martinez M.-L."/>
            <person name="Koretke K.K."/>
            <person name="Volker C."/>
            <person name="Mewes H.-W."/>
            <person name="Frishman D."/>
            <person name="Stocker S."/>
            <person name="Lupas A.N."/>
            <person name="Baumeister W."/>
        </authorList>
    </citation>
    <scope>NUCLEOTIDE SEQUENCE [LARGE SCALE GENOMIC DNA]</scope>
    <source>
        <strain>ATCC 25905 / DSM 1728 / JCM 9062 / NBRC 15155 / AMRC-C165</strain>
    </source>
</reference>
<name>SAHH_THEAC</name>
<evidence type="ECO:0000255" key="1">
    <source>
        <dbReference type="HAMAP-Rule" id="MF_00563"/>
    </source>
</evidence>
<dbReference type="EC" id="3.13.2.1" evidence="1"/>
<dbReference type="EMBL" id="AL445064">
    <property type="protein sequence ID" value="CAC11611.1"/>
    <property type="molecule type" value="Genomic_DNA"/>
</dbReference>
<dbReference type="RefSeq" id="WP_010900896.1">
    <property type="nucleotide sequence ID" value="NC_002578.1"/>
</dbReference>
<dbReference type="SMR" id="Q9HKX4"/>
<dbReference type="FunCoup" id="Q9HKX4">
    <property type="interactions" value="139"/>
</dbReference>
<dbReference type="STRING" id="273075.gene:9571689"/>
<dbReference type="PaxDb" id="273075-Ta0469"/>
<dbReference type="EnsemblBacteria" id="CAC11611">
    <property type="protein sequence ID" value="CAC11611"/>
    <property type="gene ID" value="CAC11611"/>
</dbReference>
<dbReference type="KEGG" id="tac:Ta0469"/>
<dbReference type="eggNOG" id="arCOG04137">
    <property type="taxonomic scope" value="Archaea"/>
</dbReference>
<dbReference type="HOGENOM" id="CLU_025194_2_1_2"/>
<dbReference type="InParanoid" id="Q9HKX4"/>
<dbReference type="OrthoDB" id="8479at2157"/>
<dbReference type="UniPathway" id="UPA00314">
    <property type="reaction ID" value="UER00076"/>
</dbReference>
<dbReference type="Proteomes" id="UP000001024">
    <property type="component" value="Chromosome"/>
</dbReference>
<dbReference type="GO" id="GO:0005829">
    <property type="term" value="C:cytosol"/>
    <property type="evidence" value="ECO:0007669"/>
    <property type="project" value="TreeGrafter"/>
</dbReference>
<dbReference type="GO" id="GO:0004013">
    <property type="term" value="F:adenosylhomocysteinase activity"/>
    <property type="evidence" value="ECO:0007669"/>
    <property type="project" value="UniProtKB-UniRule"/>
</dbReference>
<dbReference type="GO" id="GO:0071269">
    <property type="term" value="P:L-homocysteine biosynthetic process"/>
    <property type="evidence" value="ECO:0007669"/>
    <property type="project" value="UniProtKB-UniRule"/>
</dbReference>
<dbReference type="GO" id="GO:0006730">
    <property type="term" value="P:one-carbon metabolic process"/>
    <property type="evidence" value="ECO:0007669"/>
    <property type="project" value="UniProtKB-KW"/>
</dbReference>
<dbReference type="GO" id="GO:0033353">
    <property type="term" value="P:S-adenosylmethionine cycle"/>
    <property type="evidence" value="ECO:0007669"/>
    <property type="project" value="TreeGrafter"/>
</dbReference>
<dbReference type="CDD" id="cd00401">
    <property type="entry name" value="SAHH"/>
    <property type="match status" value="1"/>
</dbReference>
<dbReference type="Gene3D" id="3.40.50.1480">
    <property type="entry name" value="Adenosylhomocysteinase-like"/>
    <property type="match status" value="1"/>
</dbReference>
<dbReference type="Gene3D" id="3.40.50.720">
    <property type="entry name" value="NAD(P)-binding Rossmann-like Domain"/>
    <property type="match status" value="1"/>
</dbReference>
<dbReference type="HAMAP" id="MF_00563">
    <property type="entry name" value="AdoHcyase"/>
    <property type="match status" value="1"/>
</dbReference>
<dbReference type="InterPro" id="IPR042172">
    <property type="entry name" value="Adenosylhomocyst_ase-like_sf"/>
</dbReference>
<dbReference type="InterPro" id="IPR000043">
    <property type="entry name" value="Adenosylhomocysteinase-like"/>
</dbReference>
<dbReference type="InterPro" id="IPR015878">
    <property type="entry name" value="Ado_hCys_hydrolase_NAD-bd"/>
</dbReference>
<dbReference type="InterPro" id="IPR036291">
    <property type="entry name" value="NAD(P)-bd_dom_sf"/>
</dbReference>
<dbReference type="InterPro" id="IPR020082">
    <property type="entry name" value="S-Ado-L-homoCys_hydrolase_CS"/>
</dbReference>
<dbReference type="NCBIfam" id="TIGR00936">
    <property type="entry name" value="ahcY"/>
    <property type="match status" value="1"/>
</dbReference>
<dbReference type="NCBIfam" id="NF004005">
    <property type="entry name" value="PRK05476.2-3"/>
    <property type="match status" value="1"/>
</dbReference>
<dbReference type="PANTHER" id="PTHR23420">
    <property type="entry name" value="ADENOSYLHOMOCYSTEINASE"/>
    <property type="match status" value="1"/>
</dbReference>
<dbReference type="PANTHER" id="PTHR23420:SF0">
    <property type="entry name" value="ADENOSYLHOMOCYSTEINASE"/>
    <property type="match status" value="1"/>
</dbReference>
<dbReference type="Pfam" id="PF05221">
    <property type="entry name" value="AdoHcyase"/>
    <property type="match status" value="2"/>
</dbReference>
<dbReference type="Pfam" id="PF00670">
    <property type="entry name" value="AdoHcyase_NAD"/>
    <property type="match status" value="1"/>
</dbReference>
<dbReference type="PIRSF" id="PIRSF001109">
    <property type="entry name" value="Ad_hcy_hydrolase"/>
    <property type="match status" value="1"/>
</dbReference>
<dbReference type="SMART" id="SM00996">
    <property type="entry name" value="AdoHcyase"/>
    <property type="match status" value="1"/>
</dbReference>
<dbReference type="SMART" id="SM00997">
    <property type="entry name" value="AdoHcyase_NAD"/>
    <property type="match status" value="1"/>
</dbReference>
<dbReference type="SUPFAM" id="SSF52283">
    <property type="entry name" value="Formate/glycerate dehydrogenase catalytic domain-like"/>
    <property type="match status" value="1"/>
</dbReference>
<dbReference type="SUPFAM" id="SSF51735">
    <property type="entry name" value="NAD(P)-binding Rossmann-fold domains"/>
    <property type="match status" value="1"/>
</dbReference>
<dbReference type="PROSITE" id="PS00738">
    <property type="entry name" value="ADOHCYASE_1"/>
    <property type="match status" value="1"/>
</dbReference>
<dbReference type="PROSITE" id="PS00739">
    <property type="entry name" value="ADOHCYASE_2"/>
    <property type="match status" value="1"/>
</dbReference>